<protein>
    <recommendedName>
        <fullName evidence="5">Lectin</fullName>
        <shortName evidence="5">DlyL</shortName>
    </recommendedName>
</protein>
<reference evidence="7" key="1">
    <citation type="journal article" date="2017" name="Biochimie">
        <title>Molecular modeling, docking and dynamics simulations of the Dioclea lasiophylla Mart. Ex Benth seed lectin: An edematogenic and hypernociceptive protein.</title>
        <authorList>
            <person name="Pinto-Junior V.R."/>
            <person name="Osterne V.J."/>
            <person name="Santiago M.Q."/>
            <person name="Lossio C.F."/>
            <person name="Nagano C.S."/>
            <person name="Rocha C.R."/>
            <person name="Nascimento J.C."/>
            <person name="Nascimento F.L."/>
            <person name="Silva I.B."/>
            <person name="Oliveira A.S."/>
            <person name="Correia J.L."/>
            <person name="Leal R.B."/>
            <person name="Assreuy A.M."/>
            <person name="Cavada B.S."/>
            <person name="Nascimento K.S."/>
        </authorList>
    </citation>
    <scope>NUCLEOTIDE SEQUENCE [MRNA]</scope>
    <scope>PROTEIN SEQUENCE OF 29-147; 163-197 AND 202-280</scope>
    <scope>FUNCTION</scope>
    <scope>IDENTIFICATION BY MASS SPECTROMETRY</scope>
    <source>
        <tissue evidence="6">Seed</tissue>
    </source>
</reference>
<reference evidence="7" key="2">
    <citation type="journal article" date="2013" name="Molecules">
        <title>Purification, partial characterization and immobilization of a mannose-specific lectin from seeds of Dioclea lasiophylla mart.</title>
        <authorList>
            <person name="Pinto-Junior V.R."/>
            <person name="de Santiago M.Q."/>
            <person name="Osterne V.J."/>
            <person name="Correia J.L."/>
            <person name="Pereira-Junior F.N."/>
            <person name="Cajazeiras J.B."/>
            <person name="de Vasconcelos M.A."/>
            <person name="Teixeira E.H."/>
            <person name="do Nascimento A.S."/>
            <person name="Miguel T.B."/>
            <person name="Miguel E.C."/>
            <person name="Sampaio A.H."/>
            <person name="do Nascimento K.S."/>
            <person name="Nagano C.S."/>
            <person name="Cavada B.S."/>
        </authorList>
    </citation>
    <scope>FUNCTION</scope>
    <scope>BIOPHYSICOCHEMICAL PROPERTIES</scope>
    <scope>MASS SPECTROMETRY</scope>
    <scope>TOXIC DOSE</scope>
    <source>
        <tissue evidence="5">Seed</tissue>
    </source>
</reference>
<keyword id="KW-0002">3D-structure</keyword>
<keyword id="KW-0106">Calcium</keyword>
<keyword id="KW-0903">Direct protein sequencing</keyword>
<keyword id="KW-0348">Hemagglutinin</keyword>
<keyword id="KW-0430">Lectin</keyword>
<keyword id="KW-0464">Manganese</keyword>
<keyword id="KW-0465">Mannose-binding</keyword>
<keyword id="KW-0479">Metal-binding</keyword>
<keyword id="KW-0732">Signal</keyword>
<keyword id="KW-0800">Toxin</keyword>
<dbReference type="PDB" id="6CJ9">
    <property type="method" value="X-ray"/>
    <property type="resolution" value="1.70 A"/>
    <property type="chains" value="A=1-147"/>
</dbReference>
<dbReference type="PDBsum" id="6CJ9"/>
<dbReference type="SMR" id="C0HK27"/>
<dbReference type="UniLectin" id="C0HK27"/>
<dbReference type="GO" id="GO:0005537">
    <property type="term" value="F:D-mannose binding"/>
    <property type="evidence" value="ECO:0000314"/>
    <property type="project" value="UniProtKB"/>
</dbReference>
<dbReference type="GO" id="GO:0046872">
    <property type="term" value="F:metal ion binding"/>
    <property type="evidence" value="ECO:0007669"/>
    <property type="project" value="UniProtKB-KW"/>
</dbReference>
<dbReference type="GO" id="GO:0090729">
    <property type="term" value="F:toxin activity"/>
    <property type="evidence" value="ECO:0007669"/>
    <property type="project" value="UniProtKB-KW"/>
</dbReference>
<dbReference type="CDD" id="cd06899">
    <property type="entry name" value="lectin_legume_LecRK_Arcelin_ConA"/>
    <property type="match status" value="1"/>
</dbReference>
<dbReference type="FunFam" id="2.60.120.200:FF:000237">
    <property type="entry name" value="Mannose/glucose-specific lectin"/>
    <property type="match status" value="1"/>
</dbReference>
<dbReference type="Gene3D" id="2.60.120.200">
    <property type="match status" value="2"/>
</dbReference>
<dbReference type="InterPro" id="IPR013320">
    <property type="entry name" value="ConA-like_dom_sf"/>
</dbReference>
<dbReference type="InterPro" id="IPR016363">
    <property type="entry name" value="L-lectin"/>
</dbReference>
<dbReference type="InterPro" id="IPR000985">
    <property type="entry name" value="Lectin_LegA_CS"/>
</dbReference>
<dbReference type="InterPro" id="IPR019825">
    <property type="entry name" value="Lectin_legB_Mn/Ca_BS"/>
</dbReference>
<dbReference type="InterPro" id="IPR001220">
    <property type="entry name" value="Legume_lectin_dom"/>
</dbReference>
<dbReference type="InterPro" id="IPR050258">
    <property type="entry name" value="Leguminous_Lectin"/>
</dbReference>
<dbReference type="PANTHER" id="PTHR32401">
    <property type="entry name" value="CONCANAVALIN A-LIKE LECTIN FAMILY PROTEIN"/>
    <property type="match status" value="1"/>
</dbReference>
<dbReference type="PANTHER" id="PTHR32401:SF47">
    <property type="entry name" value="LEGUME LECTIN DOMAIN-CONTAINING PROTEIN"/>
    <property type="match status" value="1"/>
</dbReference>
<dbReference type="Pfam" id="PF00139">
    <property type="entry name" value="Lectin_legB"/>
    <property type="match status" value="1"/>
</dbReference>
<dbReference type="PIRSF" id="PIRSF002690">
    <property type="entry name" value="L-type_lectin_plant"/>
    <property type="match status" value="1"/>
</dbReference>
<dbReference type="SUPFAM" id="SSF49899">
    <property type="entry name" value="Concanavalin A-like lectins/glucanases"/>
    <property type="match status" value="1"/>
</dbReference>
<dbReference type="PROSITE" id="PS00308">
    <property type="entry name" value="LECTIN_LEGUME_ALPHA"/>
    <property type="match status" value="1"/>
</dbReference>
<dbReference type="PROSITE" id="PS00307">
    <property type="entry name" value="LECTIN_LEGUME_BETA"/>
    <property type="match status" value="1"/>
</dbReference>
<organism>
    <name type="scientific">Dioclea lasiophylla</name>
    <dbReference type="NCBI Taxonomy" id="1457464"/>
    <lineage>
        <taxon>Eukaryota</taxon>
        <taxon>Viridiplantae</taxon>
        <taxon>Streptophyta</taxon>
        <taxon>Embryophyta</taxon>
        <taxon>Tracheophyta</taxon>
        <taxon>Spermatophyta</taxon>
        <taxon>Magnoliopsida</taxon>
        <taxon>eudicotyledons</taxon>
        <taxon>Gunneridae</taxon>
        <taxon>Pentapetalae</taxon>
        <taxon>rosids</taxon>
        <taxon>fabids</taxon>
        <taxon>Fabales</taxon>
        <taxon>Fabaceae</taxon>
        <taxon>Papilionoideae</taxon>
        <taxon>50 kb inversion clade</taxon>
        <taxon>NPAAA clade</taxon>
        <taxon>indigoferoid/millettioid clade</taxon>
        <taxon>Phaseoleae</taxon>
        <taxon>Dioclea</taxon>
    </lineage>
</organism>
<feature type="signal peptide" evidence="4">
    <location>
        <begin position="1"/>
        <end position="28"/>
    </location>
</feature>
<feature type="chain" id="PRO_0000439578" description="Lectin, 2nd part" evidence="4">
    <location>
        <begin position="29"/>
        <end position="146"/>
    </location>
</feature>
<feature type="propeptide" id="PRO_0000439579" description="Removed in mature form" evidence="4">
    <location>
        <begin position="147"/>
        <end position="162"/>
    </location>
</feature>
<feature type="chain" id="PRO_0000439580" description="Lectin, 1st part" evidence="4">
    <location>
        <begin position="163"/>
        <end position="280"/>
    </location>
</feature>
<feature type="propeptide" id="PRO_0000439581" description="Removed in mature form" evidence="4">
    <location>
        <begin position="281"/>
        <end position="291"/>
    </location>
</feature>
<feature type="binding site" evidence="2">
    <location>
        <position position="118"/>
    </location>
    <ligand>
        <name>Ca(2+)</name>
        <dbReference type="ChEBI" id="CHEBI:29108"/>
    </ligand>
</feature>
<feature type="binding site" evidence="2">
    <location>
        <position position="138"/>
    </location>
    <ligand>
        <name>a carbohydrate</name>
        <dbReference type="ChEBI" id="CHEBI:16646"/>
    </ligand>
</feature>
<feature type="binding site" evidence="2">
    <location>
        <position position="170"/>
    </location>
    <ligand>
        <name>Mn(2+)</name>
        <dbReference type="ChEBI" id="CHEBI:29035"/>
    </ligand>
</feature>
<feature type="binding site" evidence="2">
    <location>
        <position position="172"/>
    </location>
    <ligand>
        <name>Ca(2+)</name>
        <dbReference type="ChEBI" id="CHEBI:29108"/>
    </ligand>
</feature>
<feature type="binding site" evidence="2">
    <location>
        <position position="172"/>
    </location>
    <ligand>
        <name>Mn(2+)</name>
        <dbReference type="ChEBI" id="CHEBI:29035"/>
    </ligand>
</feature>
<feature type="binding site" evidence="2">
    <location>
        <position position="174"/>
    </location>
    <ligand>
        <name>a carbohydrate</name>
        <dbReference type="ChEBI" id="CHEBI:16646"/>
    </ligand>
</feature>
<feature type="binding site" evidence="2">
    <location>
        <position position="174"/>
    </location>
    <ligand>
        <name>Ca(2+)</name>
        <dbReference type="ChEBI" id="CHEBI:29108"/>
    </ligand>
</feature>
<feature type="binding site" evidence="2">
    <location>
        <position position="176"/>
    </location>
    <ligand>
        <name>Ca(2+)</name>
        <dbReference type="ChEBI" id="CHEBI:29108"/>
    </ligand>
</feature>
<feature type="binding site" evidence="2">
    <location>
        <position position="181"/>
    </location>
    <ligand>
        <name>Ca(2+)</name>
        <dbReference type="ChEBI" id="CHEBI:29108"/>
    </ligand>
</feature>
<feature type="binding site" evidence="2">
    <location>
        <position position="181"/>
    </location>
    <ligand>
        <name>Mn(2+)</name>
        <dbReference type="ChEBI" id="CHEBI:29035"/>
    </ligand>
</feature>
<feature type="binding site" evidence="2">
    <location>
        <position position="186"/>
    </location>
    <ligand>
        <name>Mn(2+)</name>
        <dbReference type="ChEBI" id="CHEBI:29035"/>
    </ligand>
</feature>
<feature type="binding site" evidence="2">
    <location>
        <position position="208"/>
    </location>
    <ligand>
        <name>Ca(2+)</name>
        <dbReference type="ChEBI" id="CHEBI:29108"/>
    </ligand>
</feature>
<feature type="binding site" evidence="2">
    <location>
        <position position="228"/>
    </location>
    <ligand>
        <name>a carbohydrate</name>
        <dbReference type="ChEBI" id="CHEBI:16646"/>
    </ligand>
</feature>
<feature type="site" description="Cleavage" evidence="4">
    <location>
        <begin position="147"/>
        <end position="148"/>
    </location>
</feature>
<feature type="site" description="Cleavage" evidence="4">
    <location>
        <begin position="162"/>
        <end position="163"/>
    </location>
</feature>
<feature type="site" description="Cleavage" evidence="4">
    <location>
        <begin position="280"/>
        <end position="281"/>
    </location>
</feature>
<feature type="strand" evidence="8">
    <location>
        <begin position="1"/>
        <end position="6"/>
    </location>
</feature>
<feature type="strand" evidence="8">
    <location>
        <begin position="15"/>
        <end position="26"/>
    </location>
</feature>
<feature type="strand" evidence="8">
    <location>
        <begin position="28"/>
        <end position="31"/>
    </location>
</feature>
<feature type="strand" evidence="8">
    <location>
        <begin position="33"/>
        <end position="42"/>
    </location>
</feature>
<feature type="strand" evidence="8">
    <location>
        <begin position="50"/>
        <end position="54"/>
    </location>
</feature>
<feature type="strand" evidence="8">
    <location>
        <begin position="64"/>
        <end position="67"/>
    </location>
</feature>
<feature type="strand" evidence="8">
    <location>
        <begin position="80"/>
        <end position="87"/>
    </location>
</feature>
<feature type="strand" evidence="8">
    <location>
        <begin position="97"/>
        <end position="108"/>
    </location>
</feature>
<feature type="strand" evidence="8">
    <location>
        <begin position="112"/>
        <end position="115"/>
    </location>
</feature>
<feature type="strand" evidence="8">
    <location>
        <begin position="119"/>
        <end position="126"/>
    </location>
</feature>
<feature type="helix" evidence="8">
    <location>
        <begin position="137"/>
        <end position="139"/>
    </location>
</feature>
<feature type="turn" evidence="8">
    <location>
        <begin position="140"/>
        <end position="142"/>
    </location>
</feature>
<evidence type="ECO:0000250" key="1">
    <source>
        <dbReference type="UniProtKB" id="P14894"/>
    </source>
</evidence>
<evidence type="ECO:0000250" key="2">
    <source>
        <dbReference type="UniProtKB" id="P86624"/>
    </source>
</evidence>
<evidence type="ECO:0000269" key="3">
    <source>
    </source>
</evidence>
<evidence type="ECO:0000269" key="4">
    <source>
    </source>
</evidence>
<evidence type="ECO:0000303" key="5">
    <source>
    </source>
</evidence>
<evidence type="ECO:0000303" key="6">
    <source>
    </source>
</evidence>
<evidence type="ECO:0000305" key="7"/>
<evidence type="ECO:0007829" key="8">
    <source>
        <dbReference type="PDB" id="6CJ9"/>
    </source>
</evidence>
<sequence length="291" mass="31368">MGISKKSQLVPLLAFITMFLMVVSRVSSSIADANSLHFSFSQFSQNPKDLILQGDATTDSDGNLQLTRVSSDGSPQGSSVGRALFYAPVHIWEKSAVVASFDATFTFLIKSPDRDPADGITFFIANTDTSIPSGSGGRLLGLFPDANIIKNSTNLDFNAAYNADTIVAVELDSYPNTDIGDPSYPHIGIDIKSIRSKSTARWNMQTGKVGTAHISYNSVAKRLSAVVSYSGTSSTTVSYDVDLNNVLPEWVRVGLSATTGLYKETNTILSWSFTSKLKTNQLQDLRIASVV</sequence>
<proteinExistence type="evidence at protein level"/>
<accession>C0HK27</accession>
<name>LECA_DIOLA</name>
<comment type="function">
    <text evidence="3 4">D-mannose-binding lectin that also binds alpha-methyl-D-mannoside with even higher affinity (PubMed:24008245). Has hemagglutinating activity against rabbit erythrocytes (PubMed:24008245). Shows toxicity against the brine shrimp A.nauplii (PubMed:24008245). Induces reversible paw edema and hypernociceptivity in rats (PubMed:28196677).</text>
</comment>
<comment type="biophysicochemical properties">
    <phDependence>
        <text evidence="3">Optimum pH for hemagglutinating activity is 8. Activity drops with more acidic and basic pH and is lost at pH 5 and pH 8, respectively.</text>
    </phDependence>
    <temperatureDependence>
        <text evidence="3">Hemagglutinating activity is stable after incubation at 70 degrees Celsius for 1 hour but lost at higher temperatures.</text>
    </temperatureDependence>
</comment>
<comment type="PTM">
    <text evidence="4">The mature chain consists of residues 163-280 followed by residues 29-147. Concanavalin A-like lectins of the Diocleinae subtribe undergo proteolytic processing referred to as circular permutation. The propeptide is split into an N-terminal and a C-terminal part, the gamma and beta chain, respectively. These are then religated in beta-gamma order to form the mature alpha chain. The beta and gamma chains can often be detected in cell extracts.</text>
</comment>
<comment type="mass spectrometry" mass="25569.0" error="2.0" method="Electrospray" evidence="3">
    <text>The mature chain consists of residues 163-280 followed by residues 29-146. The measured range is 1-237.</text>
</comment>
<comment type="toxic dose">
    <text evidence="3">LD(50) is 45.85 ug/ml against the brine shrimp A.nauplii.</text>
</comment>
<comment type="miscellaneous">
    <text evidence="1">Binds one manganese (or another transition metal) ion and one calcium ion. The metal ions are essential for the saccharide-binding and cell-agglutinating activities.</text>
</comment>
<comment type="similarity">
    <text evidence="7">Belongs to the leguminous lectin family.</text>
</comment>